<dbReference type="EMBL" id="J00696">
    <property type="protein sequence ID" value="AAA40699.1"/>
    <property type="molecule type" value="mRNA"/>
</dbReference>
<dbReference type="EMBL" id="V01216">
    <property type="protein sequence ID" value="CAA24527.1"/>
    <property type="molecule type" value="mRNA"/>
</dbReference>
<dbReference type="EMBL" id="M11329">
    <property type="protein sequence ID" value="AAA40700.1"/>
    <property type="molecule type" value="Genomic_DNA"/>
</dbReference>
<dbReference type="EMBL" id="M10614">
    <property type="protein sequence ID" value="AAA40701.1"/>
    <property type="molecule type" value="Genomic_DNA"/>
</dbReference>
<dbReference type="PIR" id="A93069">
    <property type="entry name" value="OMRT1"/>
</dbReference>
<dbReference type="RefSeq" id="NP_445740.1">
    <property type="nucleotide sequence ID" value="NM_053288.2"/>
</dbReference>
<dbReference type="SMR" id="P02764"/>
<dbReference type="FunCoup" id="P02764">
    <property type="interactions" value="36"/>
</dbReference>
<dbReference type="STRING" id="10116.ENSRNOP00000010454"/>
<dbReference type="ChEMBL" id="CHEMBL3709434"/>
<dbReference type="GlyConnect" id="18">
    <property type="glycosylation" value="10 N-Linked glycans"/>
</dbReference>
<dbReference type="GlyCosmos" id="P02764">
    <property type="glycosylation" value="6 sites, 14 glycans"/>
</dbReference>
<dbReference type="GlyGen" id="P02764">
    <property type="glycosylation" value="7 sites, 14 N-linked glycans (1 site)"/>
</dbReference>
<dbReference type="iPTMnet" id="P02764"/>
<dbReference type="PhosphoSitePlus" id="P02764"/>
<dbReference type="PaxDb" id="10116-ENSRNOP00000010454"/>
<dbReference type="GeneID" id="24614"/>
<dbReference type="KEGG" id="rno:24614"/>
<dbReference type="UCSC" id="RGD:67390">
    <property type="organism name" value="rat"/>
</dbReference>
<dbReference type="AGR" id="RGD:67390"/>
<dbReference type="CTD" id="5004"/>
<dbReference type="RGD" id="67390">
    <property type="gene designation" value="Orm1"/>
</dbReference>
<dbReference type="eggNOG" id="ENOG502S0Q2">
    <property type="taxonomic scope" value="Eukaryota"/>
</dbReference>
<dbReference type="HOGENOM" id="CLU_117688_0_0_1"/>
<dbReference type="InParanoid" id="P02764"/>
<dbReference type="OrthoDB" id="80332at9989"/>
<dbReference type="PhylomeDB" id="P02764"/>
<dbReference type="TreeFam" id="TF343791"/>
<dbReference type="Reactome" id="R-RNO-114608">
    <property type="pathway name" value="Platelet degranulation"/>
</dbReference>
<dbReference type="Reactome" id="R-RNO-6798695">
    <property type="pathway name" value="Neutrophil degranulation"/>
</dbReference>
<dbReference type="PRO" id="PR:P02764"/>
<dbReference type="Proteomes" id="UP000002494">
    <property type="component" value="Unplaced"/>
</dbReference>
<dbReference type="GO" id="GO:0005615">
    <property type="term" value="C:extracellular space"/>
    <property type="evidence" value="ECO:0000314"/>
    <property type="project" value="RGD"/>
</dbReference>
<dbReference type="GO" id="GO:0036094">
    <property type="term" value="F:small molecule binding"/>
    <property type="evidence" value="ECO:0000314"/>
    <property type="project" value="RGD"/>
</dbReference>
<dbReference type="GO" id="GO:0002438">
    <property type="term" value="P:acute inflammatory response to antigenic stimulus"/>
    <property type="evidence" value="ECO:0000270"/>
    <property type="project" value="RGD"/>
</dbReference>
<dbReference type="GO" id="GO:0006953">
    <property type="term" value="P:acute-phase response"/>
    <property type="evidence" value="ECO:0007669"/>
    <property type="project" value="UniProtKB-KW"/>
</dbReference>
<dbReference type="GO" id="GO:0031100">
    <property type="term" value="P:animal organ regeneration"/>
    <property type="evidence" value="ECO:0000270"/>
    <property type="project" value="RGD"/>
</dbReference>
<dbReference type="GO" id="GO:0071385">
    <property type="term" value="P:cellular response to glucocorticoid stimulus"/>
    <property type="evidence" value="ECO:0000270"/>
    <property type="project" value="RGD"/>
</dbReference>
<dbReference type="GO" id="GO:0071378">
    <property type="term" value="P:cellular response to growth hormone stimulus"/>
    <property type="evidence" value="ECO:0000270"/>
    <property type="project" value="RGD"/>
</dbReference>
<dbReference type="GO" id="GO:0071300">
    <property type="term" value="P:cellular response to retinoic acid"/>
    <property type="evidence" value="ECO:0000270"/>
    <property type="project" value="RGD"/>
</dbReference>
<dbReference type="GO" id="GO:0002439">
    <property type="term" value="P:chronic inflammatory response to antigenic stimulus"/>
    <property type="evidence" value="ECO:0000270"/>
    <property type="project" value="RGD"/>
</dbReference>
<dbReference type="GO" id="GO:0032715">
    <property type="term" value="P:negative regulation of interleukin-6 production"/>
    <property type="evidence" value="ECO:0000266"/>
    <property type="project" value="RGD"/>
</dbReference>
<dbReference type="GO" id="GO:0032720">
    <property type="term" value="P:negative regulation of tumor necrosis factor production"/>
    <property type="evidence" value="ECO:0000266"/>
    <property type="project" value="RGD"/>
</dbReference>
<dbReference type="GO" id="GO:0032731">
    <property type="term" value="P:positive regulation of interleukin-1 beta production"/>
    <property type="evidence" value="ECO:0000266"/>
    <property type="project" value="RGD"/>
</dbReference>
<dbReference type="GO" id="GO:0032732">
    <property type="term" value="P:positive regulation of interleukin-1 production"/>
    <property type="evidence" value="ECO:0000266"/>
    <property type="project" value="RGD"/>
</dbReference>
<dbReference type="GO" id="GO:0032760">
    <property type="term" value="P:positive regulation of tumor necrosis factor production"/>
    <property type="evidence" value="ECO:0000266"/>
    <property type="project" value="RGD"/>
</dbReference>
<dbReference type="GO" id="GO:0002682">
    <property type="term" value="P:regulation of immune system process"/>
    <property type="evidence" value="ECO:0007669"/>
    <property type="project" value="InterPro"/>
</dbReference>
<dbReference type="GO" id="GO:1904681">
    <property type="term" value="P:response to 3-methylcholanthrene"/>
    <property type="evidence" value="ECO:0000270"/>
    <property type="project" value="RGD"/>
</dbReference>
<dbReference type="GO" id="GO:0032496">
    <property type="term" value="P:response to lipopolysaccharide"/>
    <property type="evidence" value="ECO:0000270"/>
    <property type="project" value="RGD"/>
</dbReference>
<dbReference type="GO" id="GO:0033197">
    <property type="term" value="P:response to vitamin E"/>
    <property type="evidence" value="ECO:0000270"/>
    <property type="project" value="RGD"/>
</dbReference>
<dbReference type="GO" id="GO:0009410">
    <property type="term" value="P:response to xenobiotic stimulus"/>
    <property type="evidence" value="ECO:0000270"/>
    <property type="project" value="RGD"/>
</dbReference>
<dbReference type="CDD" id="cd19451">
    <property type="entry name" value="lipocalin_AGP-like"/>
    <property type="match status" value="1"/>
</dbReference>
<dbReference type="FunFam" id="2.40.128.20:FF:000012">
    <property type="entry name" value="Alpha-1-acid glycoprotein 2"/>
    <property type="match status" value="1"/>
</dbReference>
<dbReference type="Gene3D" id="2.40.128.20">
    <property type="match status" value="1"/>
</dbReference>
<dbReference type="InterPro" id="IPR001500">
    <property type="entry name" value="A1A_glycop"/>
</dbReference>
<dbReference type="InterPro" id="IPR012674">
    <property type="entry name" value="Calycin"/>
</dbReference>
<dbReference type="InterPro" id="IPR000566">
    <property type="entry name" value="Lipocln_cytosolic_FA-bd_dom"/>
</dbReference>
<dbReference type="PANTHER" id="PTHR11967">
    <property type="entry name" value="ALPHA-1-ACID GLYCOPROTEIN"/>
    <property type="match status" value="1"/>
</dbReference>
<dbReference type="PANTHER" id="PTHR11967:SF2">
    <property type="entry name" value="ALPHA-1-ACID GLYCOPROTEIN 1"/>
    <property type="match status" value="1"/>
</dbReference>
<dbReference type="Pfam" id="PF00061">
    <property type="entry name" value="Lipocalin"/>
    <property type="match status" value="1"/>
</dbReference>
<dbReference type="PIRSF" id="PIRSF036899">
    <property type="entry name" value="AGP"/>
    <property type="match status" value="1"/>
</dbReference>
<dbReference type="PRINTS" id="PR00708">
    <property type="entry name" value="A1AGLPROTEIN"/>
</dbReference>
<dbReference type="SUPFAM" id="SSF50814">
    <property type="entry name" value="Lipocalins"/>
    <property type="match status" value="1"/>
</dbReference>
<keyword id="KW-0011">Acute phase</keyword>
<keyword id="KW-1015">Disulfide bond</keyword>
<keyword id="KW-0325">Glycoprotein</keyword>
<keyword id="KW-1185">Reference proteome</keyword>
<keyword id="KW-0964">Secreted</keyword>
<keyword id="KW-0732">Signal</keyword>
<keyword id="KW-0813">Transport</keyword>
<accession>P02764</accession>
<name>A1AG_RAT</name>
<comment type="function">
    <text evidence="1">Functions as a transport protein in the blood stream. Binds various ligands in the interior of its beta-barrel domain (By similarity). Appears to function in modulating the activity of the immune system during the acute-phase reaction.</text>
</comment>
<comment type="subcellular location">
    <subcellularLocation>
        <location evidence="1">Secreted</location>
    </subcellularLocation>
</comment>
<comment type="induction">
    <text>Alpha-1-AGP is synthesized in the liver, the synthesis being controlled by glucocorticoids, interleukin-1 and interleukin-6, it increases 5- to 50-fold upon inflammation.</text>
</comment>
<comment type="domain">
    <text evidence="1">Contains a beta-barrel that binds various ligands in its interior.</text>
</comment>
<comment type="similarity">
    <text evidence="3">Belongs to the calycin superfamily. Lipocalin family.</text>
</comment>
<protein>
    <recommendedName>
        <fullName>Alpha-1-acid glycoprotein</fullName>
    </recommendedName>
    <alternativeName>
        <fullName>Orosomucoid</fullName>
        <shortName>OMD</shortName>
    </alternativeName>
</protein>
<gene>
    <name type="primary">Orm1</name>
</gene>
<organism>
    <name type="scientific">Rattus norvegicus</name>
    <name type="common">Rat</name>
    <dbReference type="NCBI Taxonomy" id="10116"/>
    <lineage>
        <taxon>Eukaryota</taxon>
        <taxon>Metazoa</taxon>
        <taxon>Chordata</taxon>
        <taxon>Craniata</taxon>
        <taxon>Vertebrata</taxon>
        <taxon>Euteleostomi</taxon>
        <taxon>Mammalia</taxon>
        <taxon>Eutheria</taxon>
        <taxon>Euarchontoglires</taxon>
        <taxon>Glires</taxon>
        <taxon>Rodentia</taxon>
        <taxon>Myomorpha</taxon>
        <taxon>Muroidea</taxon>
        <taxon>Muridae</taxon>
        <taxon>Murinae</taxon>
        <taxon>Rattus</taxon>
    </lineage>
</organism>
<sequence length="205" mass="23575">MALHMVLVVLSLLPLLEAQNPEPANITLGIPITNETLKWLSDKWFYMGAAFRDPVFKQAVQTIQTEYFYLTPNLINDTIELREFQTTDDQCVYNFTHLGVQRENGTLSKCAGAVKIFAHLIVLKKHGTFMLAFNLTDENRGLSFYAKKPDLSPELRKIFQQAVKDVGMDESEIVFVDWTKDKCSEQQKQQLELEKETKKETKKDP</sequence>
<reference key="1">
    <citation type="journal article" date="1981" name="J. Biol. Chem.">
        <title>Nucleotide sequence of rat alpha 1-acid glycoprotein messenger RNA.</title>
        <authorList>
            <person name="Ricca G.A."/>
            <person name="Taylor J.M."/>
        </authorList>
    </citation>
    <scope>NUCLEOTIDE SEQUENCE [MRNA]</scope>
</reference>
<reference key="2">
    <citation type="journal article" date="1985" name="Mol. Cell. Biol.">
        <title>Structure of the rat alpha 1-acid glycoprotein gene.</title>
        <authorList>
            <person name="Liao Y.C.J."/>
            <person name="Taylor J.M."/>
            <person name="Vannice J.L."/>
            <person name="Clawson G.A."/>
            <person name="Smuckler E.A."/>
        </authorList>
    </citation>
    <scope>NUCLEOTIDE SEQUENCE [GENOMIC DNA]</scope>
</reference>
<reference key="3">
    <citation type="journal article" date="1985" name="J. Biol. Chem.">
        <title>Rat alpha 1-acid glycoprotein. Gene sequence and regulation by glucocorticoids in transfected L-cells.</title>
        <authorList>
            <person name="Reinke R."/>
            <person name="Feigelson P."/>
        </authorList>
    </citation>
    <scope>NUCLEOTIDE SEQUENCE [GENOMIC DNA]</scope>
</reference>
<proteinExistence type="evidence at transcript level"/>
<feature type="signal peptide">
    <location>
        <begin position="1"/>
        <end position="18"/>
    </location>
</feature>
<feature type="chain" id="PRO_0000017868" description="Alpha-1-acid glycoprotein">
    <location>
        <begin position="19"/>
        <end position="205"/>
    </location>
</feature>
<feature type="glycosylation site" description="N-linked (GlcNAc...) asparagine" evidence="2">
    <location>
        <position position="25"/>
    </location>
</feature>
<feature type="glycosylation site" description="N-linked (GlcNAc...) asparagine" evidence="2">
    <location>
        <position position="34"/>
    </location>
</feature>
<feature type="glycosylation site" description="N-linked (GlcNAc...) asparagine" evidence="2">
    <location>
        <position position="76"/>
    </location>
</feature>
<feature type="glycosylation site" description="N-linked (GlcNAc...) asparagine" evidence="2">
    <location>
        <position position="94"/>
    </location>
</feature>
<feature type="glycosylation site" description="N-linked (GlcNAc...) asparagine" evidence="2">
    <location>
        <position position="104"/>
    </location>
</feature>
<feature type="glycosylation site" description="N-linked (GlcNAc...) asparagine" evidence="2">
    <location>
        <position position="134"/>
    </location>
</feature>
<feature type="disulfide bond" evidence="1">
    <location>
        <begin position="91"/>
        <end position="183"/>
    </location>
</feature>
<evidence type="ECO:0000250" key="1"/>
<evidence type="ECO:0000255" key="2"/>
<evidence type="ECO:0000305" key="3"/>